<gene>
    <name evidence="1" type="primary">guaC</name>
    <name type="ordered locus">YE0686</name>
</gene>
<dbReference type="EC" id="1.7.1.7" evidence="1"/>
<dbReference type="EMBL" id="AM286415">
    <property type="protein sequence ID" value="CAL10795.1"/>
    <property type="molecule type" value="Genomic_DNA"/>
</dbReference>
<dbReference type="RefSeq" id="WP_005167093.1">
    <property type="nucleotide sequence ID" value="NC_008800.1"/>
</dbReference>
<dbReference type="RefSeq" id="YP_001005035.1">
    <property type="nucleotide sequence ID" value="NC_008800.1"/>
</dbReference>
<dbReference type="SMR" id="A1JJK8"/>
<dbReference type="KEGG" id="yen:YE0686"/>
<dbReference type="PATRIC" id="fig|393305.7.peg.781"/>
<dbReference type="eggNOG" id="COG0516">
    <property type="taxonomic scope" value="Bacteria"/>
</dbReference>
<dbReference type="HOGENOM" id="CLU_022552_5_3_6"/>
<dbReference type="OrthoDB" id="9805398at2"/>
<dbReference type="Proteomes" id="UP000000642">
    <property type="component" value="Chromosome"/>
</dbReference>
<dbReference type="GO" id="GO:0005829">
    <property type="term" value="C:cytosol"/>
    <property type="evidence" value="ECO:0007669"/>
    <property type="project" value="TreeGrafter"/>
</dbReference>
<dbReference type="GO" id="GO:1902560">
    <property type="term" value="C:GMP reductase complex"/>
    <property type="evidence" value="ECO:0007669"/>
    <property type="project" value="InterPro"/>
</dbReference>
<dbReference type="GO" id="GO:0003920">
    <property type="term" value="F:GMP reductase activity"/>
    <property type="evidence" value="ECO:0007669"/>
    <property type="project" value="UniProtKB-UniRule"/>
</dbReference>
<dbReference type="GO" id="GO:0046872">
    <property type="term" value="F:metal ion binding"/>
    <property type="evidence" value="ECO:0007669"/>
    <property type="project" value="UniProtKB-KW"/>
</dbReference>
<dbReference type="GO" id="GO:0006163">
    <property type="term" value="P:purine nucleotide metabolic process"/>
    <property type="evidence" value="ECO:0007669"/>
    <property type="project" value="UniProtKB-UniRule"/>
</dbReference>
<dbReference type="CDD" id="cd00381">
    <property type="entry name" value="IMPDH"/>
    <property type="match status" value="1"/>
</dbReference>
<dbReference type="FunFam" id="3.20.20.70:FF:000012">
    <property type="entry name" value="GMP reductase"/>
    <property type="match status" value="1"/>
</dbReference>
<dbReference type="Gene3D" id="3.20.20.70">
    <property type="entry name" value="Aldolase class I"/>
    <property type="match status" value="1"/>
</dbReference>
<dbReference type="HAMAP" id="MF_00596">
    <property type="entry name" value="GMP_reduct_type1"/>
    <property type="match status" value="1"/>
</dbReference>
<dbReference type="InterPro" id="IPR013785">
    <property type="entry name" value="Aldolase_TIM"/>
</dbReference>
<dbReference type="InterPro" id="IPR050139">
    <property type="entry name" value="GMP_reductase"/>
</dbReference>
<dbReference type="InterPro" id="IPR005993">
    <property type="entry name" value="GMPR"/>
</dbReference>
<dbReference type="InterPro" id="IPR015875">
    <property type="entry name" value="IMP_DH/GMP_Rdtase_CS"/>
</dbReference>
<dbReference type="InterPro" id="IPR001093">
    <property type="entry name" value="IMP_DH_GMPRt"/>
</dbReference>
<dbReference type="NCBIfam" id="TIGR01305">
    <property type="entry name" value="GMP_reduct_1"/>
    <property type="match status" value="1"/>
</dbReference>
<dbReference type="NCBIfam" id="NF003470">
    <property type="entry name" value="PRK05096.1"/>
    <property type="match status" value="1"/>
</dbReference>
<dbReference type="PANTHER" id="PTHR43170">
    <property type="entry name" value="GMP REDUCTASE"/>
    <property type="match status" value="1"/>
</dbReference>
<dbReference type="PANTHER" id="PTHR43170:SF5">
    <property type="entry name" value="GMP REDUCTASE"/>
    <property type="match status" value="1"/>
</dbReference>
<dbReference type="Pfam" id="PF00478">
    <property type="entry name" value="IMPDH"/>
    <property type="match status" value="1"/>
</dbReference>
<dbReference type="PIRSF" id="PIRSF000235">
    <property type="entry name" value="GMP_reductase"/>
    <property type="match status" value="1"/>
</dbReference>
<dbReference type="SMART" id="SM01240">
    <property type="entry name" value="IMPDH"/>
    <property type="match status" value="1"/>
</dbReference>
<dbReference type="SUPFAM" id="SSF51412">
    <property type="entry name" value="Inosine monophosphate dehydrogenase (IMPDH)"/>
    <property type="match status" value="1"/>
</dbReference>
<dbReference type="PROSITE" id="PS00487">
    <property type="entry name" value="IMP_DH_GMP_RED"/>
    <property type="match status" value="1"/>
</dbReference>
<feature type="chain" id="PRO_1000025624" description="GMP reductase">
    <location>
        <begin position="1"/>
        <end position="347"/>
    </location>
</feature>
<feature type="active site" description="Thioimidate intermediate" evidence="1">
    <location>
        <position position="186"/>
    </location>
</feature>
<feature type="binding site" evidence="1">
    <location>
        <begin position="108"/>
        <end position="131"/>
    </location>
    <ligand>
        <name>NADP(+)</name>
        <dbReference type="ChEBI" id="CHEBI:58349"/>
    </ligand>
</feature>
<feature type="binding site" evidence="1">
    <location>
        <position position="181"/>
    </location>
    <ligand>
        <name>K(+)</name>
        <dbReference type="ChEBI" id="CHEBI:29103"/>
    </ligand>
</feature>
<feature type="binding site" evidence="1">
    <location>
        <position position="183"/>
    </location>
    <ligand>
        <name>K(+)</name>
        <dbReference type="ChEBI" id="CHEBI:29103"/>
    </ligand>
</feature>
<feature type="binding site" evidence="1">
    <location>
        <begin position="216"/>
        <end position="239"/>
    </location>
    <ligand>
        <name>NADP(+)</name>
        <dbReference type="ChEBI" id="CHEBI:58349"/>
    </ligand>
</feature>
<keyword id="KW-0479">Metal-binding</keyword>
<keyword id="KW-0521">NADP</keyword>
<keyword id="KW-0560">Oxidoreductase</keyword>
<keyword id="KW-0630">Potassium</keyword>
<comment type="function">
    <text evidence="1">Catalyzes the irreversible NADPH-dependent deamination of GMP to IMP. It functions in the conversion of nucleobase, nucleoside and nucleotide derivatives of G to A nucleotides, and in maintaining the intracellular balance of A and G nucleotides.</text>
</comment>
<comment type="catalytic activity">
    <reaction evidence="1">
        <text>IMP + NH4(+) + NADP(+) = GMP + NADPH + 2 H(+)</text>
        <dbReference type="Rhea" id="RHEA:17185"/>
        <dbReference type="ChEBI" id="CHEBI:15378"/>
        <dbReference type="ChEBI" id="CHEBI:28938"/>
        <dbReference type="ChEBI" id="CHEBI:57783"/>
        <dbReference type="ChEBI" id="CHEBI:58053"/>
        <dbReference type="ChEBI" id="CHEBI:58115"/>
        <dbReference type="ChEBI" id="CHEBI:58349"/>
        <dbReference type="EC" id="1.7.1.7"/>
    </reaction>
</comment>
<comment type="subunit">
    <text evidence="1">Homotetramer.</text>
</comment>
<comment type="similarity">
    <text evidence="1">Belongs to the IMPDH/GMPR family. GuaC type 1 subfamily.</text>
</comment>
<protein>
    <recommendedName>
        <fullName evidence="1">GMP reductase</fullName>
        <ecNumber evidence="1">1.7.1.7</ecNumber>
    </recommendedName>
    <alternativeName>
        <fullName evidence="1">Guanosine 5'-monophosphate oxidoreductase</fullName>
        <shortName evidence="1">Guanosine monophosphate reductase</shortName>
    </alternativeName>
</protein>
<evidence type="ECO:0000255" key="1">
    <source>
        <dbReference type="HAMAP-Rule" id="MF_00596"/>
    </source>
</evidence>
<sequence>MRIEEGLKLGFKDVLIRPKRSTLKSRSEVELERQFTFKHSGWNWSGVPIIAANMDTVGTFRMAEVLASFDVLTAVHKHYTVEQWGEFVKRVPESVLRHVMVSTGTSSADFDKMKQILALSPALKFICIDVANGYSEHFVSFLQKAREACPDKVICAGNVVTGEMVEELILSGADIVKVGIGPGSVCTTRVKTGVGYPQLSAVIECADAAHGLGGQIVSDGGCSVPGDVAKAFGGGADFVMLGGMLAGHDECEGRVVEENGEKFMLFYGMSSESAMKRHVGGVAEYRAAEGKTVKLPLRGSVDNTVRDIMGGLRSACTYVGASHLKELTKRTTFIRVAEQENRVFGSN</sequence>
<proteinExistence type="inferred from homology"/>
<reference key="1">
    <citation type="journal article" date="2006" name="PLoS Genet.">
        <title>The complete genome sequence and comparative genome analysis of the high pathogenicity Yersinia enterocolitica strain 8081.</title>
        <authorList>
            <person name="Thomson N.R."/>
            <person name="Howard S."/>
            <person name="Wren B.W."/>
            <person name="Holden M.T.G."/>
            <person name="Crossman L."/>
            <person name="Challis G.L."/>
            <person name="Churcher C."/>
            <person name="Mungall K."/>
            <person name="Brooks K."/>
            <person name="Chillingworth T."/>
            <person name="Feltwell T."/>
            <person name="Abdellah Z."/>
            <person name="Hauser H."/>
            <person name="Jagels K."/>
            <person name="Maddison M."/>
            <person name="Moule S."/>
            <person name="Sanders M."/>
            <person name="Whitehead S."/>
            <person name="Quail M.A."/>
            <person name="Dougan G."/>
            <person name="Parkhill J."/>
            <person name="Prentice M.B."/>
        </authorList>
    </citation>
    <scope>NUCLEOTIDE SEQUENCE [LARGE SCALE GENOMIC DNA]</scope>
    <source>
        <strain>NCTC 13174 / 8081</strain>
    </source>
</reference>
<accession>A1JJK8</accession>
<organism>
    <name type="scientific">Yersinia enterocolitica serotype O:8 / biotype 1B (strain NCTC 13174 / 8081)</name>
    <dbReference type="NCBI Taxonomy" id="393305"/>
    <lineage>
        <taxon>Bacteria</taxon>
        <taxon>Pseudomonadati</taxon>
        <taxon>Pseudomonadota</taxon>
        <taxon>Gammaproteobacteria</taxon>
        <taxon>Enterobacterales</taxon>
        <taxon>Yersiniaceae</taxon>
        <taxon>Yersinia</taxon>
    </lineage>
</organism>
<name>GUAC_YERE8</name>